<evidence type="ECO:0000255" key="1">
    <source>
        <dbReference type="HAMAP-Rule" id="MF_01227"/>
    </source>
</evidence>
<comment type="function">
    <text evidence="1">Catalyzes the ATP-dependent amination of UTP to CTP with either L-glutamine or ammonia as the source of nitrogen. Regulates intracellular CTP levels through interactions with the four ribonucleotide triphosphates.</text>
</comment>
<comment type="catalytic activity">
    <reaction evidence="1">
        <text>UTP + L-glutamine + ATP + H2O = CTP + L-glutamate + ADP + phosphate + 2 H(+)</text>
        <dbReference type="Rhea" id="RHEA:26426"/>
        <dbReference type="ChEBI" id="CHEBI:15377"/>
        <dbReference type="ChEBI" id="CHEBI:15378"/>
        <dbReference type="ChEBI" id="CHEBI:29985"/>
        <dbReference type="ChEBI" id="CHEBI:30616"/>
        <dbReference type="ChEBI" id="CHEBI:37563"/>
        <dbReference type="ChEBI" id="CHEBI:43474"/>
        <dbReference type="ChEBI" id="CHEBI:46398"/>
        <dbReference type="ChEBI" id="CHEBI:58359"/>
        <dbReference type="ChEBI" id="CHEBI:456216"/>
        <dbReference type="EC" id="6.3.4.2"/>
    </reaction>
</comment>
<comment type="catalytic activity">
    <reaction evidence="1">
        <text>L-glutamine + H2O = L-glutamate + NH4(+)</text>
        <dbReference type="Rhea" id="RHEA:15889"/>
        <dbReference type="ChEBI" id="CHEBI:15377"/>
        <dbReference type="ChEBI" id="CHEBI:28938"/>
        <dbReference type="ChEBI" id="CHEBI:29985"/>
        <dbReference type="ChEBI" id="CHEBI:58359"/>
    </reaction>
</comment>
<comment type="catalytic activity">
    <reaction evidence="1">
        <text>UTP + NH4(+) + ATP = CTP + ADP + phosphate + 2 H(+)</text>
        <dbReference type="Rhea" id="RHEA:16597"/>
        <dbReference type="ChEBI" id="CHEBI:15378"/>
        <dbReference type="ChEBI" id="CHEBI:28938"/>
        <dbReference type="ChEBI" id="CHEBI:30616"/>
        <dbReference type="ChEBI" id="CHEBI:37563"/>
        <dbReference type="ChEBI" id="CHEBI:43474"/>
        <dbReference type="ChEBI" id="CHEBI:46398"/>
        <dbReference type="ChEBI" id="CHEBI:456216"/>
    </reaction>
</comment>
<comment type="activity regulation">
    <text evidence="1">Allosterically activated by GTP, when glutamine is the substrate; GTP has no effect on the reaction when ammonia is the substrate. The allosteric effector GTP functions by stabilizing the protein conformation that binds the tetrahedral intermediate(s) formed during glutamine hydrolysis. Inhibited by the product CTP, via allosteric rather than competitive inhibition.</text>
</comment>
<comment type="pathway">
    <text evidence="1">Pyrimidine metabolism; CTP biosynthesis via de novo pathway; CTP from UDP: step 2/2.</text>
</comment>
<comment type="subunit">
    <text evidence="1">Homotetramer.</text>
</comment>
<comment type="miscellaneous">
    <text evidence="1">CTPSs have evolved a hybrid strategy for distinguishing between UTP and CTP. The overlapping regions of the product feedback inhibitory and substrate sites recognize a common feature in both compounds, the triphosphate moiety. To differentiate isosteric substrate and product pyrimidine rings, an additional pocket far from the expected kinase/ligase catalytic site, specifically recognizes the cytosine and ribose portions of the product inhibitor.</text>
</comment>
<comment type="similarity">
    <text evidence="1">Belongs to the CTP synthase family.</text>
</comment>
<reference key="1">
    <citation type="submission" date="2008-10" db="EMBL/GenBank/DDBJ databases">
        <title>Genome sequence of Bacillus cereus AH820.</title>
        <authorList>
            <person name="Dodson R.J."/>
            <person name="Durkin A.S."/>
            <person name="Rosovitz M.J."/>
            <person name="Rasko D.A."/>
            <person name="Hoffmaster A."/>
            <person name="Ravel J."/>
            <person name="Sutton G."/>
        </authorList>
    </citation>
    <scope>NUCLEOTIDE SEQUENCE [LARGE SCALE GENOMIC DNA]</scope>
    <source>
        <strain>AH820</strain>
    </source>
</reference>
<feature type="chain" id="PRO_1000139379" description="CTP synthase">
    <location>
        <begin position="1"/>
        <end position="535"/>
    </location>
</feature>
<feature type="domain" description="Glutamine amidotransferase type-1" evidence="1">
    <location>
        <begin position="292"/>
        <end position="534"/>
    </location>
</feature>
<feature type="region of interest" description="Amidoligase domain" evidence="1">
    <location>
        <begin position="1"/>
        <end position="267"/>
    </location>
</feature>
<feature type="active site" description="Nucleophile; for glutamine hydrolysis" evidence="1">
    <location>
        <position position="381"/>
    </location>
</feature>
<feature type="active site" evidence="1">
    <location>
        <position position="507"/>
    </location>
</feature>
<feature type="active site" evidence="1">
    <location>
        <position position="509"/>
    </location>
</feature>
<feature type="binding site" evidence="1">
    <location>
        <position position="13"/>
    </location>
    <ligand>
        <name>CTP</name>
        <dbReference type="ChEBI" id="CHEBI:37563"/>
        <note>allosteric inhibitor</note>
    </ligand>
</feature>
<feature type="binding site" evidence="1">
    <location>
        <position position="13"/>
    </location>
    <ligand>
        <name>UTP</name>
        <dbReference type="ChEBI" id="CHEBI:46398"/>
    </ligand>
</feature>
<feature type="binding site" evidence="1">
    <location>
        <begin position="14"/>
        <end position="19"/>
    </location>
    <ligand>
        <name>ATP</name>
        <dbReference type="ChEBI" id="CHEBI:30616"/>
    </ligand>
</feature>
<feature type="binding site" evidence="1">
    <location>
        <position position="54"/>
    </location>
    <ligand>
        <name>L-glutamine</name>
        <dbReference type="ChEBI" id="CHEBI:58359"/>
    </ligand>
</feature>
<feature type="binding site" evidence="1">
    <location>
        <position position="71"/>
    </location>
    <ligand>
        <name>ATP</name>
        <dbReference type="ChEBI" id="CHEBI:30616"/>
    </ligand>
</feature>
<feature type="binding site" evidence="1">
    <location>
        <position position="71"/>
    </location>
    <ligand>
        <name>Mg(2+)</name>
        <dbReference type="ChEBI" id="CHEBI:18420"/>
    </ligand>
</feature>
<feature type="binding site" evidence="1">
    <location>
        <position position="141"/>
    </location>
    <ligand>
        <name>Mg(2+)</name>
        <dbReference type="ChEBI" id="CHEBI:18420"/>
    </ligand>
</feature>
<feature type="binding site" evidence="1">
    <location>
        <begin position="148"/>
        <end position="150"/>
    </location>
    <ligand>
        <name>CTP</name>
        <dbReference type="ChEBI" id="CHEBI:37563"/>
        <note>allosteric inhibitor</note>
    </ligand>
</feature>
<feature type="binding site" evidence="1">
    <location>
        <begin position="188"/>
        <end position="193"/>
    </location>
    <ligand>
        <name>CTP</name>
        <dbReference type="ChEBI" id="CHEBI:37563"/>
        <note>allosteric inhibitor</note>
    </ligand>
</feature>
<feature type="binding site" evidence="1">
    <location>
        <begin position="188"/>
        <end position="193"/>
    </location>
    <ligand>
        <name>UTP</name>
        <dbReference type="ChEBI" id="CHEBI:46398"/>
    </ligand>
</feature>
<feature type="binding site" evidence="1">
    <location>
        <position position="224"/>
    </location>
    <ligand>
        <name>CTP</name>
        <dbReference type="ChEBI" id="CHEBI:37563"/>
        <note>allosteric inhibitor</note>
    </ligand>
</feature>
<feature type="binding site" evidence="1">
    <location>
        <position position="224"/>
    </location>
    <ligand>
        <name>UTP</name>
        <dbReference type="ChEBI" id="CHEBI:46398"/>
    </ligand>
</feature>
<feature type="binding site" evidence="1">
    <location>
        <begin position="240"/>
        <end position="242"/>
    </location>
    <ligand>
        <name>ATP</name>
        <dbReference type="ChEBI" id="CHEBI:30616"/>
    </ligand>
</feature>
<feature type="binding site" evidence="1">
    <location>
        <position position="354"/>
    </location>
    <ligand>
        <name>L-glutamine</name>
        <dbReference type="ChEBI" id="CHEBI:58359"/>
    </ligand>
</feature>
<feature type="binding site" evidence="1">
    <location>
        <begin position="382"/>
        <end position="385"/>
    </location>
    <ligand>
        <name>L-glutamine</name>
        <dbReference type="ChEBI" id="CHEBI:58359"/>
    </ligand>
</feature>
<feature type="binding site" evidence="1">
    <location>
        <position position="405"/>
    </location>
    <ligand>
        <name>L-glutamine</name>
        <dbReference type="ChEBI" id="CHEBI:58359"/>
    </ligand>
</feature>
<feature type="binding site" evidence="1">
    <location>
        <position position="462"/>
    </location>
    <ligand>
        <name>L-glutamine</name>
        <dbReference type="ChEBI" id="CHEBI:58359"/>
    </ligand>
</feature>
<protein>
    <recommendedName>
        <fullName evidence="1">CTP synthase</fullName>
        <ecNumber evidence="1">6.3.4.2</ecNumber>
    </recommendedName>
    <alternativeName>
        <fullName evidence="1">Cytidine 5'-triphosphate synthase</fullName>
    </alternativeName>
    <alternativeName>
        <fullName evidence="1">Cytidine triphosphate synthetase</fullName>
        <shortName evidence="1">CTP synthetase</shortName>
        <shortName evidence="1">CTPS</shortName>
    </alternativeName>
    <alternativeName>
        <fullName evidence="1">UTP--ammonia ligase</fullName>
    </alternativeName>
</protein>
<proteinExistence type="inferred from homology"/>
<accession>B7JHG1</accession>
<organism>
    <name type="scientific">Bacillus cereus (strain AH820)</name>
    <dbReference type="NCBI Taxonomy" id="405535"/>
    <lineage>
        <taxon>Bacteria</taxon>
        <taxon>Bacillati</taxon>
        <taxon>Bacillota</taxon>
        <taxon>Bacilli</taxon>
        <taxon>Bacillales</taxon>
        <taxon>Bacillaceae</taxon>
        <taxon>Bacillus</taxon>
        <taxon>Bacillus cereus group</taxon>
    </lineage>
</organism>
<name>PYRG_BACC0</name>
<sequence length="535" mass="59781">MTKYIFVTGGVVSSLGKGITAASLGRLLKNRGLNVTIQKFDPYINVDPGTMSPYQHGEVFVTDDGAETDLDLGHYERFIDINLNKYSNVTTGKIYSSVLQKERRGEYLGGTVQVIPHITNEIKERVYRSGRETNADVVITEIGGTVGDIESLPFLEAIRQIKSDIGRDNVMYIHCTLIPYLKAAGEMKTKPTQHSVKELRSLGIQPNIIVVRTEMPVSQDMKDKLALFCDIDTKAVIEARDADTLYAVPLSLQEQNMDQIVCDHLKLDNPAADMTEWTALVEKVRNLSKKTKIALVGKYVELQDAYISVVEALRHAGYSFDTDVEVKWVNAEHVTAENVQELVGDTDGILVPGGFGDRGVEGKIVAIQYARENKVPFLGICLGMQLASIEFARNVLGLEGANSSEINPDTPYAIIDLLPEQKDVEDLGGTLRLGLYPCKLSEETNAYNAYNEPVVYERHRHRYEFNNQFRPDMEKAGFVFSGTSPDGRLVEIIELKDHPWFVAAQFHPELVSRPNRPQPLFHDFVRASITNKESK</sequence>
<gene>
    <name evidence="1" type="primary">pyrG</name>
    <name type="ordered locus">BCAH820_5431</name>
</gene>
<dbReference type="EC" id="6.3.4.2" evidence="1"/>
<dbReference type="EMBL" id="CP001283">
    <property type="protein sequence ID" value="ACK89646.1"/>
    <property type="molecule type" value="Genomic_DNA"/>
</dbReference>
<dbReference type="RefSeq" id="WP_000170457.1">
    <property type="nucleotide sequence ID" value="NC_011773.1"/>
</dbReference>
<dbReference type="SMR" id="B7JHG1"/>
<dbReference type="MEROPS" id="C26.964"/>
<dbReference type="GeneID" id="93005784"/>
<dbReference type="KEGG" id="bcu:BCAH820_5431"/>
<dbReference type="HOGENOM" id="CLU_011675_5_0_9"/>
<dbReference type="UniPathway" id="UPA00159">
    <property type="reaction ID" value="UER00277"/>
</dbReference>
<dbReference type="Proteomes" id="UP000001363">
    <property type="component" value="Chromosome"/>
</dbReference>
<dbReference type="GO" id="GO:0005829">
    <property type="term" value="C:cytosol"/>
    <property type="evidence" value="ECO:0007669"/>
    <property type="project" value="TreeGrafter"/>
</dbReference>
<dbReference type="GO" id="GO:0005524">
    <property type="term" value="F:ATP binding"/>
    <property type="evidence" value="ECO:0007669"/>
    <property type="project" value="UniProtKB-KW"/>
</dbReference>
<dbReference type="GO" id="GO:0003883">
    <property type="term" value="F:CTP synthase activity"/>
    <property type="evidence" value="ECO:0007669"/>
    <property type="project" value="UniProtKB-UniRule"/>
</dbReference>
<dbReference type="GO" id="GO:0004359">
    <property type="term" value="F:glutaminase activity"/>
    <property type="evidence" value="ECO:0007669"/>
    <property type="project" value="RHEA"/>
</dbReference>
<dbReference type="GO" id="GO:0042802">
    <property type="term" value="F:identical protein binding"/>
    <property type="evidence" value="ECO:0007669"/>
    <property type="project" value="TreeGrafter"/>
</dbReference>
<dbReference type="GO" id="GO:0046872">
    <property type="term" value="F:metal ion binding"/>
    <property type="evidence" value="ECO:0007669"/>
    <property type="project" value="UniProtKB-KW"/>
</dbReference>
<dbReference type="GO" id="GO:0044210">
    <property type="term" value="P:'de novo' CTP biosynthetic process"/>
    <property type="evidence" value="ECO:0007669"/>
    <property type="project" value="UniProtKB-UniRule"/>
</dbReference>
<dbReference type="GO" id="GO:0019856">
    <property type="term" value="P:pyrimidine nucleobase biosynthetic process"/>
    <property type="evidence" value="ECO:0007669"/>
    <property type="project" value="TreeGrafter"/>
</dbReference>
<dbReference type="CDD" id="cd03113">
    <property type="entry name" value="CTPS_N"/>
    <property type="match status" value="1"/>
</dbReference>
<dbReference type="CDD" id="cd01746">
    <property type="entry name" value="GATase1_CTP_Synthase"/>
    <property type="match status" value="1"/>
</dbReference>
<dbReference type="FunFam" id="3.40.50.300:FF:000009">
    <property type="entry name" value="CTP synthase"/>
    <property type="match status" value="1"/>
</dbReference>
<dbReference type="FunFam" id="3.40.50.880:FF:000002">
    <property type="entry name" value="CTP synthase"/>
    <property type="match status" value="1"/>
</dbReference>
<dbReference type="Gene3D" id="3.40.50.880">
    <property type="match status" value="1"/>
</dbReference>
<dbReference type="Gene3D" id="3.40.50.300">
    <property type="entry name" value="P-loop containing nucleotide triphosphate hydrolases"/>
    <property type="match status" value="1"/>
</dbReference>
<dbReference type="HAMAP" id="MF_01227">
    <property type="entry name" value="PyrG"/>
    <property type="match status" value="1"/>
</dbReference>
<dbReference type="InterPro" id="IPR029062">
    <property type="entry name" value="Class_I_gatase-like"/>
</dbReference>
<dbReference type="InterPro" id="IPR004468">
    <property type="entry name" value="CTP_synthase"/>
</dbReference>
<dbReference type="InterPro" id="IPR017456">
    <property type="entry name" value="CTP_synthase_N"/>
</dbReference>
<dbReference type="InterPro" id="IPR017926">
    <property type="entry name" value="GATASE"/>
</dbReference>
<dbReference type="InterPro" id="IPR033828">
    <property type="entry name" value="GATase1_CTP_Synthase"/>
</dbReference>
<dbReference type="InterPro" id="IPR027417">
    <property type="entry name" value="P-loop_NTPase"/>
</dbReference>
<dbReference type="NCBIfam" id="NF003792">
    <property type="entry name" value="PRK05380.1"/>
    <property type="match status" value="1"/>
</dbReference>
<dbReference type="NCBIfam" id="TIGR00337">
    <property type="entry name" value="PyrG"/>
    <property type="match status" value="1"/>
</dbReference>
<dbReference type="PANTHER" id="PTHR11550">
    <property type="entry name" value="CTP SYNTHASE"/>
    <property type="match status" value="1"/>
</dbReference>
<dbReference type="PANTHER" id="PTHR11550:SF0">
    <property type="entry name" value="CTP SYNTHASE-RELATED"/>
    <property type="match status" value="1"/>
</dbReference>
<dbReference type="Pfam" id="PF06418">
    <property type="entry name" value="CTP_synth_N"/>
    <property type="match status" value="1"/>
</dbReference>
<dbReference type="Pfam" id="PF00117">
    <property type="entry name" value="GATase"/>
    <property type="match status" value="1"/>
</dbReference>
<dbReference type="SUPFAM" id="SSF52317">
    <property type="entry name" value="Class I glutamine amidotransferase-like"/>
    <property type="match status" value="1"/>
</dbReference>
<dbReference type="SUPFAM" id="SSF52540">
    <property type="entry name" value="P-loop containing nucleoside triphosphate hydrolases"/>
    <property type="match status" value="1"/>
</dbReference>
<dbReference type="PROSITE" id="PS51273">
    <property type="entry name" value="GATASE_TYPE_1"/>
    <property type="match status" value="1"/>
</dbReference>
<keyword id="KW-0067">ATP-binding</keyword>
<keyword id="KW-0315">Glutamine amidotransferase</keyword>
<keyword id="KW-0436">Ligase</keyword>
<keyword id="KW-0460">Magnesium</keyword>
<keyword id="KW-0479">Metal-binding</keyword>
<keyword id="KW-0547">Nucleotide-binding</keyword>
<keyword id="KW-0665">Pyrimidine biosynthesis</keyword>